<protein>
    <recommendedName>
        <fullName evidence="1">DNA-directed RNA polymerase subunit beta</fullName>
        <shortName evidence="1">RNAP subunit beta</shortName>
        <ecNumber evidence="1">2.7.7.6</ecNumber>
    </recommendedName>
    <alternativeName>
        <fullName evidence="1">RNA polymerase subunit beta</fullName>
    </alternativeName>
    <alternativeName>
        <fullName evidence="1">Transcriptase subunit beta</fullName>
    </alternativeName>
</protein>
<keyword id="KW-0240">DNA-directed RNA polymerase</keyword>
<keyword id="KW-0548">Nucleotidyltransferase</keyword>
<keyword id="KW-1185">Reference proteome</keyword>
<keyword id="KW-0804">Transcription</keyword>
<keyword id="KW-0808">Transferase</keyword>
<organism>
    <name type="scientific">Tropheryma whipplei (strain Twist)</name>
    <name type="common">Whipple's bacillus</name>
    <dbReference type="NCBI Taxonomy" id="203267"/>
    <lineage>
        <taxon>Bacteria</taxon>
        <taxon>Bacillati</taxon>
        <taxon>Actinomycetota</taxon>
        <taxon>Actinomycetes</taxon>
        <taxon>Micrococcales</taxon>
        <taxon>Tropherymataceae</taxon>
        <taxon>Tropheryma</taxon>
    </lineage>
</organism>
<evidence type="ECO:0000255" key="1">
    <source>
        <dbReference type="HAMAP-Rule" id="MF_01321"/>
    </source>
</evidence>
<evidence type="ECO:0000305" key="2"/>
<dbReference type="EC" id="2.7.7.6" evidence="1"/>
<dbReference type="EMBL" id="AF243072">
    <property type="protein sequence ID" value="AAL05611.1"/>
    <property type="status" value="ALT_INIT"/>
    <property type="molecule type" value="Genomic_DNA"/>
</dbReference>
<dbReference type="EMBL" id="AE014184">
    <property type="protein sequence ID" value="AAO44168.1"/>
    <property type="status" value="ALT_INIT"/>
    <property type="molecule type" value="Genomic_DNA"/>
</dbReference>
<dbReference type="SMR" id="Q93GF2"/>
<dbReference type="STRING" id="203267.TWT_071"/>
<dbReference type="KEGG" id="twh:TWT_071"/>
<dbReference type="eggNOG" id="COG0085">
    <property type="taxonomic scope" value="Bacteria"/>
</dbReference>
<dbReference type="HOGENOM" id="CLU_000524_4_1_11"/>
<dbReference type="Proteomes" id="UP000002200">
    <property type="component" value="Chromosome"/>
</dbReference>
<dbReference type="GO" id="GO:0000428">
    <property type="term" value="C:DNA-directed RNA polymerase complex"/>
    <property type="evidence" value="ECO:0007669"/>
    <property type="project" value="UniProtKB-KW"/>
</dbReference>
<dbReference type="GO" id="GO:0003677">
    <property type="term" value="F:DNA binding"/>
    <property type="evidence" value="ECO:0007669"/>
    <property type="project" value="UniProtKB-UniRule"/>
</dbReference>
<dbReference type="GO" id="GO:0003899">
    <property type="term" value="F:DNA-directed RNA polymerase activity"/>
    <property type="evidence" value="ECO:0007669"/>
    <property type="project" value="UniProtKB-UniRule"/>
</dbReference>
<dbReference type="GO" id="GO:0032549">
    <property type="term" value="F:ribonucleoside binding"/>
    <property type="evidence" value="ECO:0007669"/>
    <property type="project" value="InterPro"/>
</dbReference>
<dbReference type="GO" id="GO:0006351">
    <property type="term" value="P:DNA-templated transcription"/>
    <property type="evidence" value="ECO:0007669"/>
    <property type="project" value="UniProtKB-UniRule"/>
</dbReference>
<dbReference type="CDD" id="cd00653">
    <property type="entry name" value="RNA_pol_B_RPB2"/>
    <property type="match status" value="1"/>
</dbReference>
<dbReference type="Gene3D" id="2.40.50.100">
    <property type="match status" value="1"/>
</dbReference>
<dbReference type="Gene3D" id="2.40.50.150">
    <property type="match status" value="1"/>
</dbReference>
<dbReference type="Gene3D" id="3.90.1100.10">
    <property type="match status" value="1"/>
</dbReference>
<dbReference type="Gene3D" id="2.30.150.10">
    <property type="entry name" value="DNA-directed RNA polymerase, beta subunit, external 1 domain"/>
    <property type="match status" value="1"/>
</dbReference>
<dbReference type="Gene3D" id="2.40.270.10">
    <property type="entry name" value="DNA-directed RNA polymerase, subunit 2, domain 6"/>
    <property type="match status" value="1"/>
</dbReference>
<dbReference type="Gene3D" id="3.90.1800.10">
    <property type="entry name" value="RNA polymerase alpha subunit dimerisation domain"/>
    <property type="match status" value="1"/>
</dbReference>
<dbReference type="Gene3D" id="3.90.1110.10">
    <property type="entry name" value="RNA polymerase Rpb2, domain 2"/>
    <property type="match status" value="1"/>
</dbReference>
<dbReference type="HAMAP" id="MF_01321">
    <property type="entry name" value="RNApol_bact_RpoB"/>
    <property type="match status" value="1"/>
</dbReference>
<dbReference type="InterPro" id="IPR042107">
    <property type="entry name" value="DNA-dir_RNA_pol_bsu_ext_1_sf"/>
</dbReference>
<dbReference type="InterPro" id="IPR019462">
    <property type="entry name" value="DNA-dir_RNA_pol_bsu_external_1"/>
</dbReference>
<dbReference type="InterPro" id="IPR015712">
    <property type="entry name" value="DNA-dir_RNA_pol_su2"/>
</dbReference>
<dbReference type="InterPro" id="IPR007120">
    <property type="entry name" value="DNA-dir_RNAP_su2_dom"/>
</dbReference>
<dbReference type="InterPro" id="IPR037033">
    <property type="entry name" value="DNA-dir_RNAP_su2_hyb_sf"/>
</dbReference>
<dbReference type="InterPro" id="IPR010243">
    <property type="entry name" value="RNA_pol_bsu_bac"/>
</dbReference>
<dbReference type="InterPro" id="IPR007121">
    <property type="entry name" value="RNA_pol_bsu_CS"/>
</dbReference>
<dbReference type="InterPro" id="IPR007644">
    <property type="entry name" value="RNA_pol_bsu_protrusion"/>
</dbReference>
<dbReference type="InterPro" id="IPR007642">
    <property type="entry name" value="RNA_pol_Rpb2_2"/>
</dbReference>
<dbReference type="InterPro" id="IPR037034">
    <property type="entry name" value="RNA_pol_Rpb2_2_sf"/>
</dbReference>
<dbReference type="InterPro" id="IPR007645">
    <property type="entry name" value="RNA_pol_Rpb2_3"/>
</dbReference>
<dbReference type="InterPro" id="IPR007641">
    <property type="entry name" value="RNA_pol_Rpb2_7"/>
</dbReference>
<dbReference type="InterPro" id="IPR014724">
    <property type="entry name" value="RNA_pol_RPB2_OB-fold"/>
</dbReference>
<dbReference type="NCBIfam" id="NF001616">
    <property type="entry name" value="PRK00405.1"/>
    <property type="match status" value="1"/>
</dbReference>
<dbReference type="NCBIfam" id="TIGR02013">
    <property type="entry name" value="rpoB"/>
    <property type="match status" value="1"/>
</dbReference>
<dbReference type="PANTHER" id="PTHR20856">
    <property type="entry name" value="DNA-DIRECTED RNA POLYMERASE I SUBUNIT 2"/>
    <property type="match status" value="1"/>
</dbReference>
<dbReference type="Pfam" id="PF04563">
    <property type="entry name" value="RNA_pol_Rpb2_1"/>
    <property type="match status" value="1"/>
</dbReference>
<dbReference type="Pfam" id="PF04561">
    <property type="entry name" value="RNA_pol_Rpb2_2"/>
    <property type="match status" value="1"/>
</dbReference>
<dbReference type="Pfam" id="PF04565">
    <property type="entry name" value="RNA_pol_Rpb2_3"/>
    <property type="match status" value="1"/>
</dbReference>
<dbReference type="Pfam" id="PF10385">
    <property type="entry name" value="RNA_pol_Rpb2_45"/>
    <property type="match status" value="1"/>
</dbReference>
<dbReference type="Pfam" id="PF00562">
    <property type="entry name" value="RNA_pol_Rpb2_6"/>
    <property type="match status" value="1"/>
</dbReference>
<dbReference type="Pfam" id="PF04560">
    <property type="entry name" value="RNA_pol_Rpb2_7"/>
    <property type="match status" value="1"/>
</dbReference>
<dbReference type="SUPFAM" id="SSF64484">
    <property type="entry name" value="beta and beta-prime subunits of DNA dependent RNA-polymerase"/>
    <property type="match status" value="1"/>
</dbReference>
<dbReference type="PROSITE" id="PS01166">
    <property type="entry name" value="RNA_POL_BETA"/>
    <property type="match status" value="1"/>
</dbReference>
<comment type="function">
    <text evidence="1">DNA-dependent RNA polymerase catalyzes the transcription of DNA into RNA using the four ribonucleoside triphosphates as substrates.</text>
</comment>
<comment type="catalytic activity">
    <reaction evidence="1">
        <text>RNA(n) + a ribonucleoside 5'-triphosphate = RNA(n+1) + diphosphate</text>
        <dbReference type="Rhea" id="RHEA:21248"/>
        <dbReference type="Rhea" id="RHEA-COMP:14527"/>
        <dbReference type="Rhea" id="RHEA-COMP:17342"/>
        <dbReference type="ChEBI" id="CHEBI:33019"/>
        <dbReference type="ChEBI" id="CHEBI:61557"/>
        <dbReference type="ChEBI" id="CHEBI:140395"/>
        <dbReference type="EC" id="2.7.7.6"/>
    </reaction>
</comment>
<comment type="subunit">
    <text evidence="1">The RNAP catalytic core consists of 2 alpha, 1 beta, 1 beta' and 1 omega subunit. When a sigma factor is associated with the core the holoenzyme is formed, which can initiate transcription.</text>
</comment>
<comment type="similarity">
    <text evidence="1">Belongs to the RNA polymerase beta chain family.</text>
</comment>
<comment type="sequence caution" evidence="2">
    <conflict type="erroneous initiation">
        <sequence resource="EMBL-CDS" id="AAL05611"/>
    </conflict>
</comment>
<comment type="sequence caution" evidence="2">
    <conflict type="erroneous initiation">
        <sequence resource="EMBL-CDS" id="AAO44168"/>
    </conflict>
</comment>
<sequence length="1157" mass="127880">MSLFGVGFLASAKGKRVCAIGRSSLGKISDPLEVPNLLDLQLDSFDWLIGGPRWRVALDAYRKNPSGAPIAEKSGLDEVFDEISPIEDSAGNMQLNFSKPVLEAEELSVRECRVRGRTYSAPLYVEAEFMNHDTGEIKTQTVFMGDFPLMTDKGTFVINGTERVVVSQLVRSPGVYFERTPEKNSEKDLFSGRIIPARGAWLEFEVDRHDQLGVRVDRKRRQPVIFFLRAIGMTDDEIRDAFGEFESISVQHEKNIGLSRDDALREIYRRVRPGEQASAEAGRALLENFYFTSRRFDLARVGRYKVNRKLGVDVDPTRMVLTRSDIIATIRYLAALHLGFSEVAVLNSNKSVPISTDDIDHLGNRRIRPVGELVQNQLRAGLARMERVVRERMTTQDIEAIIPQTLINVMPIVAALKEFYGTSQLSQFMDQNNPLAGLTHKRRLSALGPGGLSRERAGVEVRDVNPSHYGRMCPIETPEGPNIGLIGSLACYSRVNSFGFIETPYRRVVNGKVTDDIEYMTATQEDEHAIAQASTPLRPDNSFVDERVLVRRKGGEVEVVPADQVDYMDVSGRQMVSVATSLIPFLEHNDANRALMGSNMQRQAVPLLVTESPLVGTGMERYVAIDAGDVLIAEDPGIVGDVSADVVTVKQDDGKHRDYHVGKFVRSNQGNCYNQRVVVRSGDRVEKGTVLADGPCTDKGELSLGRNLLVAFMPWEGYNFEDAIIISQNLVKDDTLSSIHIEEHEVSTRDTKLGSEEITRDLPNVSMDYIKDLDERGIIRIGAEVGPGDILVGKVTPKGETELSAEERLLRAIFNEKSMEVRDTSLKVPHGQQGTVIDVKLFDAVDGEDKLGAGINQRVVVYIAHKRKITEGDKLAGRHGNKGVISKILPVEDMPFMADGTPVDIILNPLGVPARMNFGQVLETHLGWISKQGWKIEGDPDWAKDIRVREAQPDSRVSSPVFDGISEGEITGLFSSVFPNRDGERAVGSDGKAILYDGRTGEPFPEPISVGYMYVLKLHHLVDDKIHARSTGPYSMITQQPLGGKAQFGGQRFGEMEVWALEAYGAAHALQELLTIKSDDVVGRVKVYDAIVKGYPIPTPGVPESFKVIVKEMQSLCINIEVVSDGEDDVSADAETLQIEEGLDTSPKVEVGSLEEV</sequence>
<feature type="chain" id="PRO_0000047990" description="DNA-directed RNA polymerase subunit beta">
    <location>
        <begin position="1"/>
        <end position="1157"/>
    </location>
</feature>
<feature type="sequence conflict" description="In Ref. 1; AAL05611." evidence="2" ref="1">
    <original>D</original>
    <variation>H</variation>
    <location>
        <position position="693"/>
    </location>
</feature>
<name>RPOB_TROWT</name>
<accession>Q93GF2</accession>
<gene>
    <name evidence="1" type="primary">rpoB</name>
    <name type="ordered locus">TWT_071</name>
</gene>
<reference key="1">
    <citation type="journal article" date="2001" name="J. Clin. Microbiol.">
        <title>rpoB sequence analysis of cultured Tropheryma whippelii.</title>
        <authorList>
            <person name="Drancourt M."/>
            <person name="Carlioz A."/>
            <person name="Raoult D."/>
        </authorList>
    </citation>
    <scope>NUCLEOTIDE SEQUENCE [GENOMIC DNA]</scope>
</reference>
<reference key="2">
    <citation type="journal article" date="2003" name="Genome Res.">
        <title>Tropheryma whipplei twist: a human pathogenic Actinobacteria with a reduced genome.</title>
        <authorList>
            <person name="Raoult D."/>
            <person name="Ogata H."/>
            <person name="Audic S."/>
            <person name="Robert C."/>
            <person name="Suhre K."/>
            <person name="Drancourt M."/>
            <person name="Claverie J.-M."/>
        </authorList>
    </citation>
    <scope>NUCLEOTIDE SEQUENCE [LARGE SCALE GENOMIC DNA]</scope>
    <source>
        <strain>Twist</strain>
    </source>
</reference>
<proteinExistence type="inferred from homology"/>